<keyword id="KW-0244">Early protein</keyword>
<keyword id="KW-1185">Reference proteome</keyword>
<sequence length="542" mass="63354">MFSLQKKALQHIYMTPENASQLTKDLLQHLGLYWNGPVIKMDTVVHLHNKIFSNRSVLKYALAKQANITIIKTLVLWVEPEYALAQALKHNRKDVLECIFSYHLTTPKYHHIMHLTSSQELFEFFHLFICKSKNYNARMECLLYAATLYNFPNILEKNREYIIRHSIGNTLFAIACKERHIHLIAWFVTAGVLDTYDDSTLFNTAFRLGDYSLLEVACDLPIIYPDYLIISMMQTAIQKNYFRFFKKLLTHFNIYRQIIITDAAYYNRRKILLLLLNQNVFNNFAILCALSAAIKGHASKKTLNLLISQLDSQMTVIDSVYYSIIKYNNIDCIPLLMQIKTFRLETLVSIAVHGDNIDIIAACKAFLPKDTLYHLVLKMAIISRNHKLFKLYTEKENPMYIFTTIKAIISNLVNYTVVQAVAIEYLREFHREKQLPIVPLLMVLAEHNYITKFKKACYAANMSDQKVKRALIKCLFIASQKNYCQIFKYCFGSLLKVLSKHERVKFFNSVVFAKKLASYYDHQNMIHLIDSLIERFRYLIKD</sequence>
<feature type="chain" id="PRO_0000373354" description="Protein MGF 505-11L">
    <location>
        <begin position="1"/>
        <end position="542"/>
    </location>
</feature>
<protein>
    <recommendedName>
        <fullName>Protein MGF 505-11L</fullName>
    </recommendedName>
</protein>
<organismHost>
    <name type="scientific">Ornithodoros</name>
    <name type="common">relapsing fever ticks</name>
    <dbReference type="NCBI Taxonomy" id="6937"/>
</organismHost>
<organismHost>
    <name type="scientific">Sus scrofa</name>
    <name type="common">Pig</name>
    <dbReference type="NCBI Taxonomy" id="9823"/>
</organismHost>
<comment type="function">
    <text evidence="1">Plays a role in virus cell tropism, and may be required for efficient virus replication in macrophages.</text>
</comment>
<comment type="induction">
    <text evidence="2">Expressed in the early phase of the viral replicative cycle.</text>
</comment>
<comment type="similarity">
    <text evidence="3">Belongs to the asfivirus MGF 505 family.</text>
</comment>
<gene>
    <name type="ordered locus">BA71V-150</name>
    <name type="ORF">DP542L</name>
</gene>
<accession>Q65208</accession>
<reference key="1">
    <citation type="journal article" date="1995" name="Virology">
        <title>Analysis of the complete nucleotide sequence of African swine fever virus.</title>
        <authorList>
            <person name="Yanez R.J."/>
            <person name="Rodriguez J.M."/>
            <person name="Nogal M.L."/>
            <person name="Yuste L."/>
            <person name="Enriquez C."/>
            <person name="Rodriguez J.F."/>
            <person name="Vinuela E."/>
        </authorList>
    </citation>
    <scope>NUCLEOTIDE SEQUENCE [LARGE SCALE GENOMIC DNA]</scope>
</reference>
<reference key="2">
    <citation type="journal article" date="2001" name="J. Virol.">
        <title>African swine fever virus multigene family 360 and 530 genes are novel macrophage host range determinants.</title>
        <authorList>
            <person name="Zsak L."/>
            <person name="Lu Z."/>
            <person name="Burrage T.G."/>
            <person name="Neilan J.G."/>
            <person name="Kutish G.F."/>
            <person name="Moore D.M."/>
            <person name="Rock D.L."/>
        </authorList>
    </citation>
    <scope>FUNCTION</scope>
</reference>
<reference key="3">
    <citation type="journal article" date="2020" name="J. Virol.">
        <title>The African Swine Fever Virus Transcriptome.</title>
        <authorList>
            <person name="Cackett G."/>
            <person name="Matelska D."/>
            <person name="Sykora M."/>
            <person name="Portugal R."/>
            <person name="Malecki M."/>
            <person name="Baehler J."/>
            <person name="Dixon L."/>
            <person name="Werner F."/>
        </authorList>
    </citation>
    <scope>INDUCTION</scope>
</reference>
<organism>
    <name type="scientific">African swine fever virus (strain Badajoz 1971 Vero-adapted)</name>
    <name type="common">Ba71V</name>
    <name type="synonym">ASFV</name>
    <dbReference type="NCBI Taxonomy" id="10498"/>
    <lineage>
        <taxon>Viruses</taxon>
        <taxon>Varidnaviria</taxon>
        <taxon>Bamfordvirae</taxon>
        <taxon>Nucleocytoviricota</taxon>
        <taxon>Pokkesviricetes</taxon>
        <taxon>Asfuvirales</taxon>
        <taxon>Asfarviridae</taxon>
        <taxon>Asfivirus</taxon>
        <taxon>African swine fever virus</taxon>
    </lineage>
</organism>
<proteinExistence type="evidence at transcript level"/>
<dbReference type="EMBL" id="U18466">
    <property type="protein sequence ID" value="AAA65376.1"/>
    <property type="molecule type" value="Genomic_DNA"/>
</dbReference>
<dbReference type="RefSeq" id="NP_042840.1">
    <property type="nucleotide sequence ID" value="NC_001659.2"/>
</dbReference>
<dbReference type="SMR" id="Q65208"/>
<dbReference type="GeneID" id="22220376"/>
<dbReference type="KEGG" id="vg:22220376"/>
<dbReference type="Proteomes" id="UP000000624">
    <property type="component" value="Segment"/>
</dbReference>
<dbReference type="InterPro" id="IPR004858">
    <property type="entry name" value="MGF_505"/>
</dbReference>
<dbReference type="Pfam" id="PF03158">
    <property type="entry name" value="DUF249"/>
    <property type="match status" value="1"/>
</dbReference>
<name>50511_ASFB7</name>
<evidence type="ECO:0000269" key="1">
    <source>
    </source>
</evidence>
<evidence type="ECO:0000269" key="2">
    <source>
    </source>
</evidence>
<evidence type="ECO:0000305" key="3"/>